<organism>
    <name type="scientific">Arabidopsis thaliana</name>
    <name type="common">Mouse-ear cress</name>
    <dbReference type="NCBI Taxonomy" id="3702"/>
    <lineage>
        <taxon>Eukaryota</taxon>
        <taxon>Viridiplantae</taxon>
        <taxon>Streptophyta</taxon>
        <taxon>Embryophyta</taxon>
        <taxon>Tracheophyta</taxon>
        <taxon>Spermatophyta</taxon>
        <taxon>Magnoliopsida</taxon>
        <taxon>eudicotyledons</taxon>
        <taxon>Gunneridae</taxon>
        <taxon>Pentapetalae</taxon>
        <taxon>rosids</taxon>
        <taxon>malvids</taxon>
        <taxon>Brassicales</taxon>
        <taxon>Brassicaceae</taxon>
        <taxon>Camelineae</taxon>
        <taxon>Arabidopsis</taxon>
    </lineage>
</organism>
<proteinExistence type="evidence at protein level"/>
<sequence length="355" mass="39618">MAFSAPSLSKFSLLVAISASALLCCAFARDFSIVGYTPEHLTNTDKLLELFESWMSEHSKAYKSVEEKVHRFEVFRENLMHIDQRNNEINSYWLGLNEFADLTHEEFKGRYLGLAKPQFSRKRQPSANFRYRDITDLPKSVDWRKKGAVAPVKDQGQCGSCWAFSTVAAVEGINQITTGNLSSLSEQELIDCDTTFNSGCNGGLMDYAFQYIISTGGLHKEDDYPYLMEEGICQEQKEDVERVTISGYEDVPENDDESLVKALAHQPVSVAIEASGRDFQFYKGGVFNGKCGTDLDHGVAAVGYGSSKGSDYVIVKNSWGPRWGEKGFIRMKRNTGKPEGLCGINKMASYPTKTK</sequence>
<feature type="signal peptide" evidence="4">
    <location>
        <begin position="1"/>
        <end position="28"/>
    </location>
</feature>
<feature type="propeptide" id="PRO_0000026467" description="Activation peptide" evidence="1">
    <location>
        <begin position="29"/>
        <end position="136"/>
    </location>
</feature>
<feature type="chain" id="PRO_0000026468" description="Cysteine protease XCP1">
    <location>
        <begin position="137"/>
        <end position="355"/>
    </location>
</feature>
<feature type="active site" evidence="6">
    <location>
        <position position="161"/>
    </location>
</feature>
<feature type="active site" evidence="7">
    <location>
        <position position="297"/>
    </location>
</feature>
<feature type="active site" evidence="8">
    <location>
        <position position="317"/>
    </location>
</feature>
<feature type="glycosylation site" description="N-linked (GlcNAc...) asparagine" evidence="5">
    <location>
        <position position="180"/>
    </location>
</feature>
<feature type="disulfide bond" evidence="3">
    <location>
        <begin position="158"/>
        <end position="200"/>
    </location>
</feature>
<feature type="disulfide bond" evidence="3">
    <location>
        <begin position="192"/>
        <end position="233"/>
    </location>
</feature>
<feature type="disulfide bond" evidence="3">
    <location>
        <begin position="291"/>
        <end position="342"/>
    </location>
</feature>
<accession>O65493</accession>
<name>XCP1_ARATH</name>
<gene>
    <name evidence="12" type="primary">XCP1</name>
    <name evidence="14" type="ordered locus">At4g35350</name>
    <name evidence="15" type="ORF">F23E12.90</name>
</gene>
<reference key="1">
    <citation type="journal article" date="2000" name="Plant Physiol.">
        <title>Exploiting secondary growth in Arabidopsis. Construction of xylem and bark cDNA libraries and cloning of three xylem endopeptidases.</title>
        <authorList>
            <person name="Zhao C."/>
            <person name="Johnson B.J."/>
            <person name="Kositsup B."/>
            <person name="Beers E.P."/>
        </authorList>
    </citation>
    <scope>NUCLEOTIDE SEQUENCE [MRNA]</scope>
    <scope>TISSUE SPECIFICITY</scope>
    <source>
        <tissue>Xylem</tissue>
    </source>
</reference>
<reference key="2">
    <citation type="journal article" date="1999" name="Nature">
        <title>Sequence and analysis of chromosome 4 of the plant Arabidopsis thaliana.</title>
        <authorList>
            <person name="Mayer K.F.X."/>
            <person name="Schueller C."/>
            <person name="Wambutt R."/>
            <person name="Murphy G."/>
            <person name="Volckaert G."/>
            <person name="Pohl T."/>
            <person name="Duesterhoeft A."/>
            <person name="Stiekema W."/>
            <person name="Entian K.-D."/>
            <person name="Terryn N."/>
            <person name="Harris B."/>
            <person name="Ansorge W."/>
            <person name="Brandt P."/>
            <person name="Grivell L.A."/>
            <person name="Rieger M."/>
            <person name="Weichselgartner M."/>
            <person name="de Simone V."/>
            <person name="Obermaier B."/>
            <person name="Mache R."/>
            <person name="Mueller M."/>
            <person name="Kreis M."/>
            <person name="Delseny M."/>
            <person name="Puigdomenech P."/>
            <person name="Watson M."/>
            <person name="Schmidtheini T."/>
            <person name="Reichert B."/>
            <person name="Portetelle D."/>
            <person name="Perez-Alonso M."/>
            <person name="Boutry M."/>
            <person name="Bancroft I."/>
            <person name="Vos P."/>
            <person name="Hoheisel J."/>
            <person name="Zimmermann W."/>
            <person name="Wedler H."/>
            <person name="Ridley P."/>
            <person name="Langham S.-A."/>
            <person name="McCullagh B."/>
            <person name="Bilham L."/>
            <person name="Robben J."/>
            <person name="van der Schueren J."/>
            <person name="Grymonprez B."/>
            <person name="Chuang Y.-J."/>
            <person name="Vandenbussche F."/>
            <person name="Braeken M."/>
            <person name="Weltjens I."/>
            <person name="Voet M."/>
            <person name="Bastiaens I."/>
            <person name="Aert R."/>
            <person name="Defoor E."/>
            <person name="Weitzenegger T."/>
            <person name="Bothe G."/>
            <person name="Ramsperger U."/>
            <person name="Hilbert H."/>
            <person name="Braun M."/>
            <person name="Holzer E."/>
            <person name="Brandt A."/>
            <person name="Peters S."/>
            <person name="van Staveren M."/>
            <person name="Dirkse W."/>
            <person name="Mooijman P."/>
            <person name="Klein Lankhorst R."/>
            <person name="Rose M."/>
            <person name="Hauf J."/>
            <person name="Koetter P."/>
            <person name="Berneiser S."/>
            <person name="Hempel S."/>
            <person name="Feldpausch M."/>
            <person name="Lamberth S."/>
            <person name="Van den Daele H."/>
            <person name="De Keyser A."/>
            <person name="Buysshaert C."/>
            <person name="Gielen J."/>
            <person name="Villarroel R."/>
            <person name="De Clercq R."/>
            <person name="van Montagu M."/>
            <person name="Rogers J."/>
            <person name="Cronin A."/>
            <person name="Quail M.A."/>
            <person name="Bray-Allen S."/>
            <person name="Clark L."/>
            <person name="Doggett J."/>
            <person name="Hall S."/>
            <person name="Kay M."/>
            <person name="Lennard N."/>
            <person name="McLay K."/>
            <person name="Mayes R."/>
            <person name="Pettett A."/>
            <person name="Rajandream M.A."/>
            <person name="Lyne M."/>
            <person name="Benes V."/>
            <person name="Rechmann S."/>
            <person name="Borkova D."/>
            <person name="Bloecker H."/>
            <person name="Scharfe M."/>
            <person name="Grimm M."/>
            <person name="Loehnert T.-H."/>
            <person name="Dose S."/>
            <person name="de Haan M."/>
            <person name="Maarse A.C."/>
            <person name="Schaefer M."/>
            <person name="Mueller-Auer S."/>
            <person name="Gabel C."/>
            <person name="Fuchs M."/>
            <person name="Fartmann B."/>
            <person name="Granderath K."/>
            <person name="Dauner D."/>
            <person name="Herzl A."/>
            <person name="Neumann S."/>
            <person name="Argiriou A."/>
            <person name="Vitale D."/>
            <person name="Liguori R."/>
            <person name="Piravandi E."/>
            <person name="Massenet O."/>
            <person name="Quigley F."/>
            <person name="Clabauld G."/>
            <person name="Muendlein A."/>
            <person name="Felber R."/>
            <person name="Schnabl S."/>
            <person name="Hiller R."/>
            <person name="Schmidt W."/>
            <person name="Lecharny A."/>
            <person name="Aubourg S."/>
            <person name="Chefdor F."/>
            <person name="Cooke R."/>
            <person name="Berger C."/>
            <person name="Monfort A."/>
            <person name="Casacuberta E."/>
            <person name="Gibbons T."/>
            <person name="Weber N."/>
            <person name="Vandenbol M."/>
            <person name="Bargues M."/>
            <person name="Terol J."/>
            <person name="Torres A."/>
            <person name="Perez-Perez A."/>
            <person name="Purnelle B."/>
            <person name="Bent E."/>
            <person name="Johnson S."/>
            <person name="Tacon D."/>
            <person name="Jesse T."/>
            <person name="Heijnen L."/>
            <person name="Schwarz S."/>
            <person name="Scholler P."/>
            <person name="Heber S."/>
            <person name="Francs P."/>
            <person name="Bielke C."/>
            <person name="Frishman D."/>
            <person name="Haase D."/>
            <person name="Lemcke K."/>
            <person name="Mewes H.-W."/>
            <person name="Stocker S."/>
            <person name="Zaccaria P."/>
            <person name="Bevan M."/>
            <person name="Wilson R.K."/>
            <person name="de la Bastide M."/>
            <person name="Habermann K."/>
            <person name="Parnell L."/>
            <person name="Dedhia N."/>
            <person name="Gnoj L."/>
            <person name="Schutz K."/>
            <person name="Huang E."/>
            <person name="Spiegel L."/>
            <person name="Sekhon M."/>
            <person name="Murray J."/>
            <person name="Sheet P."/>
            <person name="Cordes M."/>
            <person name="Abu-Threideh J."/>
            <person name="Stoneking T."/>
            <person name="Kalicki J."/>
            <person name="Graves T."/>
            <person name="Harmon G."/>
            <person name="Edwards J."/>
            <person name="Latreille P."/>
            <person name="Courtney L."/>
            <person name="Cloud J."/>
            <person name="Abbott A."/>
            <person name="Scott K."/>
            <person name="Johnson D."/>
            <person name="Minx P."/>
            <person name="Bentley D."/>
            <person name="Fulton B."/>
            <person name="Miller N."/>
            <person name="Greco T."/>
            <person name="Kemp K."/>
            <person name="Kramer J."/>
            <person name="Fulton L."/>
            <person name="Mardis E."/>
            <person name="Dante M."/>
            <person name="Pepin K."/>
            <person name="Hillier L.W."/>
            <person name="Nelson J."/>
            <person name="Spieth J."/>
            <person name="Ryan E."/>
            <person name="Andrews S."/>
            <person name="Geisel C."/>
            <person name="Layman D."/>
            <person name="Du H."/>
            <person name="Ali J."/>
            <person name="Berghoff A."/>
            <person name="Jones K."/>
            <person name="Drone K."/>
            <person name="Cotton M."/>
            <person name="Joshu C."/>
            <person name="Antonoiu B."/>
            <person name="Zidanic M."/>
            <person name="Strong C."/>
            <person name="Sun H."/>
            <person name="Lamar B."/>
            <person name="Yordan C."/>
            <person name="Ma P."/>
            <person name="Zhong J."/>
            <person name="Preston R."/>
            <person name="Vil D."/>
            <person name="Shekher M."/>
            <person name="Matero A."/>
            <person name="Shah R."/>
            <person name="Swaby I.K."/>
            <person name="O'Shaughnessy A."/>
            <person name="Rodriguez M."/>
            <person name="Hoffman J."/>
            <person name="Till S."/>
            <person name="Granat S."/>
            <person name="Shohdy N."/>
            <person name="Hasegawa A."/>
            <person name="Hameed A."/>
            <person name="Lodhi M."/>
            <person name="Johnson A."/>
            <person name="Chen E."/>
            <person name="Marra M.A."/>
            <person name="Martienssen R."/>
            <person name="McCombie W.R."/>
        </authorList>
    </citation>
    <scope>NUCLEOTIDE SEQUENCE [LARGE SCALE GENOMIC DNA]</scope>
    <source>
        <strain>cv. Columbia</strain>
    </source>
</reference>
<reference key="3">
    <citation type="journal article" date="2017" name="Plant J.">
        <title>Araport11: a complete reannotation of the Arabidopsis thaliana reference genome.</title>
        <authorList>
            <person name="Cheng C.Y."/>
            <person name="Krishnakumar V."/>
            <person name="Chan A.P."/>
            <person name="Thibaud-Nissen F."/>
            <person name="Schobel S."/>
            <person name="Town C.D."/>
        </authorList>
    </citation>
    <scope>GENOME REANNOTATION</scope>
    <source>
        <strain>cv. Columbia</strain>
    </source>
</reference>
<reference key="4">
    <citation type="journal article" date="2002" name="Science">
        <title>Functional annotation of a full-length Arabidopsis cDNA collection.</title>
        <authorList>
            <person name="Seki M."/>
            <person name="Narusaka M."/>
            <person name="Kamiya A."/>
            <person name="Ishida J."/>
            <person name="Satou M."/>
            <person name="Sakurai T."/>
            <person name="Nakajima M."/>
            <person name="Enju A."/>
            <person name="Akiyama K."/>
            <person name="Oono Y."/>
            <person name="Muramatsu M."/>
            <person name="Hayashizaki Y."/>
            <person name="Kawai J."/>
            <person name="Carninci P."/>
            <person name="Itoh M."/>
            <person name="Ishii Y."/>
            <person name="Arakawa T."/>
            <person name="Shibata K."/>
            <person name="Shinagawa A."/>
            <person name="Shinozaki K."/>
        </authorList>
    </citation>
    <scope>NUCLEOTIDE SEQUENCE [LARGE SCALE MRNA]</scope>
    <source>
        <strain>cv. Columbia</strain>
    </source>
</reference>
<reference key="5">
    <citation type="journal article" date="2003" name="Science">
        <title>Empirical analysis of transcriptional activity in the Arabidopsis genome.</title>
        <authorList>
            <person name="Yamada K."/>
            <person name="Lim J."/>
            <person name="Dale J.M."/>
            <person name="Chen H."/>
            <person name="Shinn P."/>
            <person name="Palm C.J."/>
            <person name="Southwick A.M."/>
            <person name="Wu H.C."/>
            <person name="Kim C.J."/>
            <person name="Nguyen M."/>
            <person name="Pham P.K."/>
            <person name="Cheuk R.F."/>
            <person name="Karlin-Newmann G."/>
            <person name="Liu S.X."/>
            <person name="Lam B."/>
            <person name="Sakano H."/>
            <person name="Wu T."/>
            <person name="Yu G."/>
            <person name="Miranda M."/>
            <person name="Quach H.L."/>
            <person name="Tripp M."/>
            <person name="Chang C.H."/>
            <person name="Lee J.M."/>
            <person name="Toriumi M.J."/>
            <person name="Chan M.M."/>
            <person name="Tang C.C."/>
            <person name="Onodera C.S."/>
            <person name="Deng J.M."/>
            <person name="Akiyama K."/>
            <person name="Ansari Y."/>
            <person name="Arakawa T."/>
            <person name="Banh J."/>
            <person name="Banno F."/>
            <person name="Bowser L."/>
            <person name="Brooks S.Y."/>
            <person name="Carninci P."/>
            <person name="Chao Q."/>
            <person name="Choy N."/>
            <person name="Enju A."/>
            <person name="Goldsmith A.D."/>
            <person name="Gurjal M."/>
            <person name="Hansen N.F."/>
            <person name="Hayashizaki Y."/>
            <person name="Johnson-Hopson C."/>
            <person name="Hsuan V.W."/>
            <person name="Iida K."/>
            <person name="Karnes M."/>
            <person name="Khan S."/>
            <person name="Koesema E."/>
            <person name="Ishida J."/>
            <person name="Jiang P.X."/>
            <person name="Jones T."/>
            <person name="Kawai J."/>
            <person name="Kamiya A."/>
            <person name="Meyers C."/>
            <person name="Nakajima M."/>
            <person name="Narusaka M."/>
            <person name="Seki M."/>
            <person name="Sakurai T."/>
            <person name="Satou M."/>
            <person name="Tamse R."/>
            <person name="Vaysberg M."/>
            <person name="Wallender E.K."/>
            <person name="Wong C."/>
            <person name="Yamamura Y."/>
            <person name="Yuan S."/>
            <person name="Shinozaki K."/>
            <person name="Davis R.W."/>
            <person name="Theologis A."/>
            <person name="Ecker J.R."/>
        </authorList>
    </citation>
    <scope>NUCLEOTIDE SEQUENCE [LARGE SCALE MRNA]</scope>
    <source>
        <strain>cv. Columbia</strain>
    </source>
</reference>
<reference key="6">
    <citation type="journal article" date="2002" name="Plant Physiol.">
        <title>The Arabidopsis xylem peptidase XCP1 is a tracheary element vacuolar protein that may be a papain ortholog.</title>
        <authorList>
            <person name="Funk V."/>
            <person name="Kositsup B."/>
            <person name="Zhao C."/>
            <person name="Beers E.P."/>
        </authorList>
    </citation>
    <scope>TISSUE SPECIFICITY</scope>
    <scope>SUBCELLULAR LOCATION</scope>
    <scope>PROTEOLYTIC PROCESSING</scope>
    <scope>IDENTIFICATION BY MASS SPECTROMETRY</scope>
</reference>
<reference key="7">
    <citation type="journal article" date="2008" name="Plant J.">
        <title>Cysteine proteases XCP1 and XCP2 aid micro-autolysis within the intact central vacuole during xylogenesis in Arabidopsis roots.</title>
        <authorList>
            <person name="Avci U."/>
            <person name="Petzold H.E."/>
            <person name="Ismail I.O."/>
            <person name="Beers E.P."/>
            <person name="Haigler C.H."/>
        </authorList>
    </citation>
    <scope>FUNCTION</scope>
</reference>
<keyword id="KW-0025">Alternative splicing</keyword>
<keyword id="KW-0068">Autocatalytic cleavage</keyword>
<keyword id="KW-1003">Cell membrane</keyword>
<keyword id="KW-1015">Disulfide bond</keyword>
<keyword id="KW-0325">Glycoprotein</keyword>
<keyword id="KW-0378">Hydrolase</keyword>
<keyword id="KW-0472">Membrane</keyword>
<keyword id="KW-0645">Protease</keyword>
<keyword id="KW-1185">Reference proteome</keyword>
<keyword id="KW-0732">Signal</keyword>
<keyword id="KW-0788">Thiol protease</keyword>
<keyword id="KW-0926">Vacuole</keyword>
<keyword id="KW-0865">Zymogen</keyword>
<dbReference type="EC" id="3.4.22.-" evidence="2"/>
<dbReference type="EMBL" id="AF191027">
    <property type="protein sequence ID" value="AAF25831.1"/>
    <property type="molecule type" value="mRNA"/>
</dbReference>
<dbReference type="EMBL" id="AL022604">
    <property type="protein sequence ID" value="CAA18734.1"/>
    <property type="molecule type" value="Genomic_DNA"/>
</dbReference>
<dbReference type="EMBL" id="AL161587">
    <property type="protein sequence ID" value="CAB80252.1"/>
    <property type="molecule type" value="Genomic_DNA"/>
</dbReference>
<dbReference type="EMBL" id="CP002687">
    <property type="protein sequence ID" value="AEE86501.1"/>
    <property type="molecule type" value="Genomic_DNA"/>
</dbReference>
<dbReference type="EMBL" id="AK117394">
    <property type="protein sequence ID" value="BAC42063.1"/>
    <property type="molecule type" value="mRNA"/>
</dbReference>
<dbReference type="EMBL" id="BT005179">
    <property type="protein sequence ID" value="AAO50712.1"/>
    <property type="molecule type" value="mRNA"/>
</dbReference>
<dbReference type="PIR" id="T06122">
    <property type="entry name" value="T06122"/>
</dbReference>
<dbReference type="RefSeq" id="NP_567983.1">
    <molecule id="O65493-1"/>
    <property type="nucleotide sequence ID" value="NM_119701.4"/>
</dbReference>
<dbReference type="SMR" id="O65493"/>
<dbReference type="FunCoup" id="O65493">
    <property type="interactions" value="704"/>
</dbReference>
<dbReference type="STRING" id="3702.O65493"/>
<dbReference type="MEROPS" id="C01.065"/>
<dbReference type="MEROPS" id="I29.003"/>
<dbReference type="GlyCosmos" id="O65493">
    <property type="glycosylation" value="1 site, No reported glycans"/>
</dbReference>
<dbReference type="GlyGen" id="O65493">
    <property type="glycosylation" value="1 site"/>
</dbReference>
<dbReference type="PaxDb" id="3702-AT4G35350.1"/>
<dbReference type="ProteomicsDB" id="242374">
    <molecule id="O65493-1"/>
</dbReference>
<dbReference type="EnsemblPlants" id="AT4G35350.1">
    <molecule id="O65493-1"/>
    <property type="protein sequence ID" value="AT4G35350.1"/>
    <property type="gene ID" value="AT4G35350"/>
</dbReference>
<dbReference type="GeneID" id="829688"/>
<dbReference type="Gramene" id="AT4G35350.1">
    <molecule id="O65493-1"/>
    <property type="protein sequence ID" value="AT4G35350.1"/>
    <property type="gene ID" value="AT4G35350"/>
</dbReference>
<dbReference type="KEGG" id="ath:AT4G35350"/>
<dbReference type="Araport" id="AT4G35350"/>
<dbReference type="TAIR" id="AT4G35350">
    <property type="gene designation" value="XCP1"/>
</dbReference>
<dbReference type="eggNOG" id="KOG1543">
    <property type="taxonomic scope" value="Eukaryota"/>
</dbReference>
<dbReference type="HOGENOM" id="CLU_012184_1_0_1"/>
<dbReference type="InParanoid" id="O65493"/>
<dbReference type="OMA" id="KSNPNQM"/>
<dbReference type="OrthoDB" id="10253408at2759"/>
<dbReference type="PhylomeDB" id="O65493"/>
<dbReference type="PRO" id="PR:O65493"/>
<dbReference type="Proteomes" id="UP000006548">
    <property type="component" value="Chromosome 4"/>
</dbReference>
<dbReference type="ExpressionAtlas" id="O65493">
    <property type="expression patterns" value="baseline and differential"/>
</dbReference>
<dbReference type="GO" id="GO:0005634">
    <property type="term" value="C:nucleus"/>
    <property type="evidence" value="ECO:0007005"/>
    <property type="project" value="TAIR"/>
</dbReference>
<dbReference type="GO" id="GO:0000325">
    <property type="term" value="C:plant-type vacuole"/>
    <property type="evidence" value="ECO:0000314"/>
    <property type="project" value="TAIR"/>
</dbReference>
<dbReference type="GO" id="GO:0005886">
    <property type="term" value="C:plasma membrane"/>
    <property type="evidence" value="ECO:0007669"/>
    <property type="project" value="UniProtKB-SubCell"/>
</dbReference>
<dbReference type="GO" id="GO:0008234">
    <property type="term" value="F:cysteine-type peptidase activity"/>
    <property type="evidence" value="ECO:0007669"/>
    <property type="project" value="UniProtKB-KW"/>
</dbReference>
<dbReference type="GO" id="GO:0010623">
    <property type="term" value="P:programmed cell death involved in cell development"/>
    <property type="evidence" value="ECO:0000315"/>
    <property type="project" value="TAIR"/>
</dbReference>
<dbReference type="GO" id="GO:0006508">
    <property type="term" value="P:proteolysis"/>
    <property type="evidence" value="ECO:0007669"/>
    <property type="project" value="UniProtKB-KW"/>
</dbReference>
<dbReference type="CDD" id="cd02248">
    <property type="entry name" value="Peptidase_C1A"/>
    <property type="match status" value="1"/>
</dbReference>
<dbReference type="FunFam" id="3.90.70.10:FF:000055">
    <property type="entry name" value="cysteine protease XCP2"/>
    <property type="match status" value="1"/>
</dbReference>
<dbReference type="Gene3D" id="3.90.70.10">
    <property type="entry name" value="Cysteine proteinases"/>
    <property type="match status" value="1"/>
</dbReference>
<dbReference type="InterPro" id="IPR038765">
    <property type="entry name" value="Papain-like_cys_pep_sf"/>
</dbReference>
<dbReference type="InterPro" id="IPR000169">
    <property type="entry name" value="Pept_cys_AS"/>
</dbReference>
<dbReference type="InterPro" id="IPR025660">
    <property type="entry name" value="Pept_his_AS"/>
</dbReference>
<dbReference type="InterPro" id="IPR013128">
    <property type="entry name" value="Peptidase_C1A"/>
</dbReference>
<dbReference type="InterPro" id="IPR000668">
    <property type="entry name" value="Peptidase_C1A_C"/>
</dbReference>
<dbReference type="InterPro" id="IPR039417">
    <property type="entry name" value="Peptidase_C1A_papain-like"/>
</dbReference>
<dbReference type="InterPro" id="IPR013201">
    <property type="entry name" value="Prot_inhib_I29"/>
</dbReference>
<dbReference type="PANTHER" id="PTHR12411">
    <property type="entry name" value="CYSTEINE PROTEASE FAMILY C1-RELATED"/>
    <property type="match status" value="1"/>
</dbReference>
<dbReference type="Pfam" id="PF08246">
    <property type="entry name" value="Inhibitor_I29"/>
    <property type="match status" value="1"/>
</dbReference>
<dbReference type="Pfam" id="PF00112">
    <property type="entry name" value="Peptidase_C1"/>
    <property type="match status" value="1"/>
</dbReference>
<dbReference type="PRINTS" id="PR00705">
    <property type="entry name" value="PAPAIN"/>
</dbReference>
<dbReference type="SMART" id="SM00848">
    <property type="entry name" value="Inhibitor_I29"/>
    <property type="match status" value="1"/>
</dbReference>
<dbReference type="SMART" id="SM00645">
    <property type="entry name" value="Pept_C1"/>
    <property type="match status" value="1"/>
</dbReference>
<dbReference type="SUPFAM" id="SSF54001">
    <property type="entry name" value="Cysteine proteinases"/>
    <property type="match status" value="1"/>
</dbReference>
<dbReference type="PROSITE" id="PS00139">
    <property type="entry name" value="THIOL_PROTEASE_CYS"/>
    <property type="match status" value="1"/>
</dbReference>
<dbReference type="PROSITE" id="PS00639">
    <property type="entry name" value="THIOL_PROTEASE_HIS"/>
    <property type="match status" value="1"/>
</dbReference>
<comment type="function">
    <text evidence="11">Cysteine protease involved in xylem tracheary element (TE) autolysis during xylogenesis in roots. Participates in micro autolysis within the intact central vacuole before mega autolysis is initiated by tonoplast implosion.</text>
</comment>
<comment type="subcellular location">
    <subcellularLocation>
        <location evidence="10">Vacuole</location>
    </subcellularLocation>
    <subcellularLocation>
        <location evidence="10">Cell membrane</location>
    </subcellularLocation>
    <text>Predominantly vacuolar. May be associated to plasma membrane.</text>
</comment>
<comment type="alternative products">
    <event type="alternative splicing"/>
    <isoform>
        <id>O65493-1</id>
        <name>1</name>
        <sequence type="displayed"/>
    </isoform>
    <text>A number of isoforms are produced. According to EST sequences.</text>
</comment>
<comment type="tissue specificity">
    <text evidence="9 10">Mostly expressed in roots, stems and flowers. Confined to tracheary elements, and specifically to xylem.</text>
</comment>
<comment type="PTM">
    <text>Autocleaves.</text>
</comment>
<comment type="similarity">
    <text evidence="6 7">Belongs to the peptidase C1 family.</text>
</comment>
<evidence type="ECO:0000250" key="1">
    <source>
        <dbReference type="UniProtKB" id="P00785"/>
    </source>
</evidence>
<evidence type="ECO:0000250" key="2">
    <source>
        <dbReference type="UniProtKB" id="P80884"/>
    </source>
</evidence>
<evidence type="ECO:0000250" key="3">
    <source>
        <dbReference type="UniProtKB" id="P84346"/>
    </source>
</evidence>
<evidence type="ECO:0000255" key="4"/>
<evidence type="ECO:0000255" key="5">
    <source>
        <dbReference type="PROSITE-ProRule" id="PRU00498"/>
    </source>
</evidence>
<evidence type="ECO:0000255" key="6">
    <source>
        <dbReference type="PROSITE-ProRule" id="PRU10088"/>
    </source>
</evidence>
<evidence type="ECO:0000255" key="7">
    <source>
        <dbReference type="PROSITE-ProRule" id="PRU10089"/>
    </source>
</evidence>
<evidence type="ECO:0000255" key="8">
    <source>
        <dbReference type="PROSITE-ProRule" id="PRU10090"/>
    </source>
</evidence>
<evidence type="ECO:0000269" key="9">
    <source>
    </source>
</evidence>
<evidence type="ECO:0000269" key="10">
    <source>
    </source>
</evidence>
<evidence type="ECO:0000269" key="11">
    <source>
    </source>
</evidence>
<evidence type="ECO:0000303" key="12">
    <source>
    </source>
</evidence>
<evidence type="ECO:0000305" key="13"/>
<evidence type="ECO:0000312" key="14">
    <source>
        <dbReference type="Araport" id="AT4G35350"/>
    </source>
</evidence>
<evidence type="ECO:0000312" key="15">
    <source>
        <dbReference type="EMBL" id="CAA18734.1"/>
    </source>
</evidence>
<protein>
    <recommendedName>
        <fullName evidence="13">Cysteine protease XCP1</fullName>
        <ecNumber evidence="2">3.4.22.-</ecNumber>
    </recommendedName>
    <alternativeName>
        <fullName evidence="12">Xylem cysteine peptidase 1</fullName>
        <shortName evidence="12">AtXCP1</shortName>
    </alternativeName>
</protein>